<accession>Q6BSD9</accession>
<comment type="subcellular location">
    <subcellularLocation>
        <location evidence="1">Cytoplasm</location>
    </subcellularLocation>
    <subcellularLocation>
        <location evidence="1">Nucleus</location>
    </subcellularLocation>
</comment>
<comment type="similarity">
    <text evidence="2">Belongs to the LOT5 family.</text>
</comment>
<dbReference type="EMBL" id="CR382136">
    <property type="protein sequence ID" value="CAG87033.1"/>
    <property type="molecule type" value="Genomic_DNA"/>
</dbReference>
<dbReference type="RefSeq" id="XP_458881.1">
    <property type="nucleotide sequence ID" value="XM_458881.1"/>
</dbReference>
<dbReference type="FunCoup" id="Q6BSD9">
    <property type="interactions" value="52"/>
</dbReference>
<dbReference type="STRING" id="284592.Q6BSD9"/>
<dbReference type="GeneID" id="2901058"/>
<dbReference type="KEGG" id="dha:DEHA2D09570g"/>
<dbReference type="VEuPathDB" id="FungiDB:DEHA2D09570g"/>
<dbReference type="eggNOG" id="ENOG502RY1I">
    <property type="taxonomic scope" value="Eukaryota"/>
</dbReference>
<dbReference type="HOGENOM" id="CLU_087379_0_0_1"/>
<dbReference type="InParanoid" id="Q6BSD9"/>
<dbReference type="OMA" id="HEQPNVE"/>
<dbReference type="OrthoDB" id="19714at2759"/>
<dbReference type="Proteomes" id="UP000000599">
    <property type="component" value="Chromosome D"/>
</dbReference>
<dbReference type="GO" id="GO:0005829">
    <property type="term" value="C:cytosol"/>
    <property type="evidence" value="ECO:0007669"/>
    <property type="project" value="TreeGrafter"/>
</dbReference>
<dbReference type="GO" id="GO:0034715">
    <property type="term" value="C:pICln-Sm protein complex"/>
    <property type="evidence" value="ECO:0007669"/>
    <property type="project" value="TreeGrafter"/>
</dbReference>
<dbReference type="GO" id="GO:0005681">
    <property type="term" value="C:spliceosomal complex"/>
    <property type="evidence" value="ECO:0007669"/>
    <property type="project" value="TreeGrafter"/>
</dbReference>
<dbReference type="GO" id="GO:0045292">
    <property type="term" value="P:mRNA cis splicing, via spliceosome"/>
    <property type="evidence" value="ECO:0007669"/>
    <property type="project" value="TreeGrafter"/>
</dbReference>
<dbReference type="GO" id="GO:0000387">
    <property type="term" value="P:spliceosomal snRNP assembly"/>
    <property type="evidence" value="ECO:0007669"/>
    <property type="project" value="TreeGrafter"/>
</dbReference>
<dbReference type="Gene3D" id="2.30.29.30">
    <property type="entry name" value="Pleckstrin-homology domain (PH domain)/Phosphotyrosine-binding domain (PTB)"/>
    <property type="match status" value="1"/>
</dbReference>
<dbReference type="InterPro" id="IPR039924">
    <property type="entry name" value="ICln/Lot5/Saf5"/>
</dbReference>
<dbReference type="InterPro" id="IPR011993">
    <property type="entry name" value="PH-like_dom_sf"/>
</dbReference>
<dbReference type="PANTHER" id="PTHR21399">
    <property type="entry name" value="CHLORIDE CONDUCTANCE REGULATORY PROTEIN ICLN"/>
    <property type="match status" value="1"/>
</dbReference>
<dbReference type="PANTHER" id="PTHR21399:SF0">
    <property type="entry name" value="METHYLOSOME SUBUNIT PICLN"/>
    <property type="match status" value="1"/>
</dbReference>
<dbReference type="Pfam" id="PF03517">
    <property type="entry name" value="Voldacs"/>
    <property type="match status" value="1"/>
</dbReference>
<reference key="1">
    <citation type="journal article" date="2004" name="Nature">
        <title>Genome evolution in yeasts.</title>
        <authorList>
            <person name="Dujon B."/>
            <person name="Sherman D."/>
            <person name="Fischer G."/>
            <person name="Durrens P."/>
            <person name="Casaregola S."/>
            <person name="Lafontaine I."/>
            <person name="de Montigny J."/>
            <person name="Marck C."/>
            <person name="Neuveglise C."/>
            <person name="Talla E."/>
            <person name="Goffard N."/>
            <person name="Frangeul L."/>
            <person name="Aigle M."/>
            <person name="Anthouard V."/>
            <person name="Babour A."/>
            <person name="Barbe V."/>
            <person name="Barnay S."/>
            <person name="Blanchin S."/>
            <person name="Beckerich J.-M."/>
            <person name="Beyne E."/>
            <person name="Bleykasten C."/>
            <person name="Boisrame A."/>
            <person name="Boyer J."/>
            <person name="Cattolico L."/>
            <person name="Confanioleri F."/>
            <person name="de Daruvar A."/>
            <person name="Despons L."/>
            <person name="Fabre E."/>
            <person name="Fairhead C."/>
            <person name="Ferry-Dumazet H."/>
            <person name="Groppi A."/>
            <person name="Hantraye F."/>
            <person name="Hennequin C."/>
            <person name="Jauniaux N."/>
            <person name="Joyet P."/>
            <person name="Kachouri R."/>
            <person name="Kerrest A."/>
            <person name="Koszul R."/>
            <person name="Lemaire M."/>
            <person name="Lesur I."/>
            <person name="Ma L."/>
            <person name="Muller H."/>
            <person name="Nicaud J.-M."/>
            <person name="Nikolski M."/>
            <person name="Oztas S."/>
            <person name="Ozier-Kalogeropoulos O."/>
            <person name="Pellenz S."/>
            <person name="Potier S."/>
            <person name="Richard G.-F."/>
            <person name="Straub M.-L."/>
            <person name="Suleau A."/>
            <person name="Swennen D."/>
            <person name="Tekaia F."/>
            <person name="Wesolowski-Louvel M."/>
            <person name="Westhof E."/>
            <person name="Wirth B."/>
            <person name="Zeniou-Meyer M."/>
            <person name="Zivanovic Y."/>
            <person name="Bolotin-Fukuhara M."/>
            <person name="Thierry A."/>
            <person name="Bouchier C."/>
            <person name="Caudron B."/>
            <person name="Scarpelli C."/>
            <person name="Gaillardin C."/>
            <person name="Weissenbach J."/>
            <person name="Wincker P."/>
            <person name="Souciet J.-L."/>
        </authorList>
    </citation>
    <scope>NUCLEOTIDE SEQUENCE [LARGE SCALE GENOMIC DNA]</scope>
    <source>
        <strain>ATCC 36239 / CBS 767 / BCRC 21394 / JCM 1990 / NBRC 0083 / IGC 2968</strain>
    </source>
</reference>
<protein>
    <recommendedName>
        <fullName>Protein LOT5</fullName>
    </recommendedName>
</protein>
<gene>
    <name type="primary">LOT5</name>
    <name type="ordered locus">DEHA2D09570g</name>
</gene>
<name>LOT5_DEBHA</name>
<sequence>MKPNPKLIFEQPNIENTIPLSVYQASSPEKFSIEDDDKLVMHAGGSGYKISILRNDPTQEVKVHEDFQSMENSSVSLFVLNTCVIIWLDEIQKGLELPYQSISLSALQSNNDHQALYLQVLSNDYISSIPTEPTEYTSTVELIITKEKDIPESMVNRLFESMVSDIHGLYNGLSTCSAFHYDSDSDEENGDNTNGFYGMDFQDSDTNAPALEIPSSWIDDEGHDHDIAIKNIGDADDLELDEEELQRVRDESGTPVAGMNVDVGYASIVGSIRKRGEDDMGEFNKSRKLI</sequence>
<keyword id="KW-0963">Cytoplasm</keyword>
<keyword id="KW-0539">Nucleus</keyword>
<keyword id="KW-1185">Reference proteome</keyword>
<feature type="chain" id="PRO_0000324397" description="Protein LOT5">
    <location>
        <begin position="1"/>
        <end position="290"/>
    </location>
</feature>
<proteinExistence type="inferred from homology"/>
<organism>
    <name type="scientific">Debaryomyces hansenii (strain ATCC 36239 / CBS 767 / BCRC 21394 / JCM 1990 / NBRC 0083 / IGC 2968)</name>
    <name type="common">Yeast</name>
    <name type="synonym">Torulaspora hansenii</name>
    <dbReference type="NCBI Taxonomy" id="284592"/>
    <lineage>
        <taxon>Eukaryota</taxon>
        <taxon>Fungi</taxon>
        <taxon>Dikarya</taxon>
        <taxon>Ascomycota</taxon>
        <taxon>Saccharomycotina</taxon>
        <taxon>Pichiomycetes</taxon>
        <taxon>Debaryomycetaceae</taxon>
        <taxon>Debaryomyces</taxon>
    </lineage>
</organism>
<evidence type="ECO:0000250" key="1"/>
<evidence type="ECO:0000305" key="2"/>